<protein>
    <recommendedName>
        <fullName evidence="1">Acetylglutamate kinase</fullName>
        <ecNumber evidence="1">2.7.2.8</ecNumber>
    </recommendedName>
    <alternativeName>
        <fullName evidence="1">N-acetyl-L-glutamate 5-phosphotransferase</fullName>
    </alternativeName>
    <alternativeName>
        <fullName evidence="1">NAG kinase</fullName>
        <shortName evidence="1">NAGK</shortName>
    </alternativeName>
</protein>
<feature type="chain" id="PRO_1000118346" description="Acetylglutamate kinase">
    <location>
        <begin position="1"/>
        <end position="254"/>
    </location>
</feature>
<feature type="binding site" evidence="1">
    <location>
        <begin position="40"/>
        <end position="41"/>
    </location>
    <ligand>
        <name>substrate</name>
    </ligand>
</feature>
<feature type="binding site" evidence="1">
    <location>
        <position position="62"/>
    </location>
    <ligand>
        <name>substrate</name>
    </ligand>
</feature>
<feature type="binding site" evidence="1">
    <location>
        <position position="158"/>
    </location>
    <ligand>
        <name>substrate</name>
    </ligand>
</feature>
<feature type="site" description="Transition state stabilizer" evidence="1">
    <location>
        <position position="8"/>
    </location>
</feature>
<feature type="site" description="Transition state stabilizer" evidence="1">
    <location>
        <position position="217"/>
    </location>
</feature>
<keyword id="KW-0028">Amino-acid biosynthesis</keyword>
<keyword id="KW-0055">Arginine biosynthesis</keyword>
<keyword id="KW-0067">ATP-binding</keyword>
<keyword id="KW-0963">Cytoplasm</keyword>
<keyword id="KW-0418">Kinase</keyword>
<keyword id="KW-0547">Nucleotide-binding</keyword>
<keyword id="KW-0808">Transferase</keyword>
<reference key="1">
    <citation type="submission" date="2008-12" db="EMBL/GenBank/DDBJ databases">
        <title>Complete sequence of Chloroflexus aggregans DSM 9485.</title>
        <authorList>
            <consortium name="US DOE Joint Genome Institute"/>
            <person name="Lucas S."/>
            <person name="Copeland A."/>
            <person name="Lapidus A."/>
            <person name="Glavina del Rio T."/>
            <person name="Dalin E."/>
            <person name="Tice H."/>
            <person name="Pitluck S."/>
            <person name="Foster B."/>
            <person name="Larimer F."/>
            <person name="Land M."/>
            <person name="Hauser L."/>
            <person name="Kyrpides N."/>
            <person name="Mikhailova N."/>
            <person name="Bryant D.A."/>
            <person name="Richardson P."/>
        </authorList>
    </citation>
    <scope>NUCLEOTIDE SEQUENCE [LARGE SCALE GENOMIC DNA]</scope>
    <source>
        <strain>MD-66 / DSM 9485</strain>
    </source>
</reference>
<comment type="function">
    <text evidence="1">Catalyzes the ATP-dependent phosphorylation of N-acetyl-L-glutamate.</text>
</comment>
<comment type="catalytic activity">
    <reaction evidence="1">
        <text>N-acetyl-L-glutamate + ATP = N-acetyl-L-glutamyl 5-phosphate + ADP</text>
        <dbReference type="Rhea" id="RHEA:14629"/>
        <dbReference type="ChEBI" id="CHEBI:30616"/>
        <dbReference type="ChEBI" id="CHEBI:44337"/>
        <dbReference type="ChEBI" id="CHEBI:57936"/>
        <dbReference type="ChEBI" id="CHEBI:456216"/>
        <dbReference type="EC" id="2.7.2.8"/>
    </reaction>
</comment>
<comment type="pathway">
    <text evidence="1">Amino-acid biosynthesis; L-arginine biosynthesis; N(2)-acetyl-L-ornithine from L-glutamate: step 2/4.</text>
</comment>
<comment type="subcellular location">
    <subcellularLocation>
        <location evidence="1">Cytoplasm</location>
    </subcellularLocation>
</comment>
<comment type="similarity">
    <text evidence="1">Belongs to the acetylglutamate kinase family. ArgB subfamily.</text>
</comment>
<gene>
    <name evidence="1" type="primary">argB</name>
    <name type="ordered locus">Cagg_0350</name>
</gene>
<evidence type="ECO:0000255" key="1">
    <source>
        <dbReference type="HAMAP-Rule" id="MF_00082"/>
    </source>
</evidence>
<dbReference type="EC" id="2.7.2.8" evidence="1"/>
<dbReference type="EMBL" id="CP001337">
    <property type="protein sequence ID" value="ACL23296.1"/>
    <property type="molecule type" value="Genomic_DNA"/>
</dbReference>
<dbReference type="RefSeq" id="WP_012615662.1">
    <property type="nucleotide sequence ID" value="NC_011831.1"/>
</dbReference>
<dbReference type="SMR" id="B8G2Z2"/>
<dbReference type="STRING" id="326427.Cagg_0350"/>
<dbReference type="KEGG" id="cag:Cagg_0350"/>
<dbReference type="eggNOG" id="COG0548">
    <property type="taxonomic scope" value="Bacteria"/>
</dbReference>
<dbReference type="HOGENOM" id="CLU_053680_1_0_0"/>
<dbReference type="OrthoDB" id="9803155at2"/>
<dbReference type="UniPathway" id="UPA00068">
    <property type="reaction ID" value="UER00107"/>
</dbReference>
<dbReference type="Proteomes" id="UP000002508">
    <property type="component" value="Chromosome"/>
</dbReference>
<dbReference type="GO" id="GO:0005737">
    <property type="term" value="C:cytoplasm"/>
    <property type="evidence" value="ECO:0007669"/>
    <property type="project" value="UniProtKB-SubCell"/>
</dbReference>
<dbReference type="GO" id="GO:0003991">
    <property type="term" value="F:acetylglutamate kinase activity"/>
    <property type="evidence" value="ECO:0007669"/>
    <property type="project" value="UniProtKB-UniRule"/>
</dbReference>
<dbReference type="GO" id="GO:0005524">
    <property type="term" value="F:ATP binding"/>
    <property type="evidence" value="ECO:0007669"/>
    <property type="project" value="UniProtKB-UniRule"/>
</dbReference>
<dbReference type="GO" id="GO:0042450">
    <property type="term" value="P:arginine biosynthetic process via ornithine"/>
    <property type="evidence" value="ECO:0007669"/>
    <property type="project" value="UniProtKB-UniRule"/>
</dbReference>
<dbReference type="GO" id="GO:0006526">
    <property type="term" value="P:L-arginine biosynthetic process"/>
    <property type="evidence" value="ECO:0007669"/>
    <property type="project" value="UniProtKB-UniPathway"/>
</dbReference>
<dbReference type="CDD" id="cd04238">
    <property type="entry name" value="AAK_NAGK-like"/>
    <property type="match status" value="1"/>
</dbReference>
<dbReference type="Gene3D" id="3.40.1160.10">
    <property type="entry name" value="Acetylglutamate kinase-like"/>
    <property type="match status" value="1"/>
</dbReference>
<dbReference type="HAMAP" id="MF_00082">
    <property type="entry name" value="ArgB"/>
    <property type="match status" value="1"/>
</dbReference>
<dbReference type="InterPro" id="IPR036393">
    <property type="entry name" value="AceGlu_kinase-like_sf"/>
</dbReference>
<dbReference type="InterPro" id="IPR004662">
    <property type="entry name" value="AcgluKinase_fam"/>
</dbReference>
<dbReference type="InterPro" id="IPR037528">
    <property type="entry name" value="ArgB"/>
</dbReference>
<dbReference type="InterPro" id="IPR001048">
    <property type="entry name" value="Asp/Glu/Uridylate_kinase"/>
</dbReference>
<dbReference type="NCBIfam" id="TIGR00761">
    <property type="entry name" value="argB"/>
    <property type="match status" value="1"/>
</dbReference>
<dbReference type="PANTHER" id="PTHR23342">
    <property type="entry name" value="N-ACETYLGLUTAMATE SYNTHASE"/>
    <property type="match status" value="1"/>
</dbReference>
<dbReference type="PANTHER" id="PTHR23342:SF0">
    <property type="entry name" value="N-ACETYLGLUTAMATE SYNTHASE, MITOCHONDRIAL"/>
    <property type="match status" value="1"/>
</dbReference>
<dbReference type="Pfam" id="PF00696">
    <property type="entry name" value="AA_kinase"/>
    <property type="match status" value="1"/>
</dbReference>
<dbReference type="PIRSF" id="PIRSF000728">
    <property type="entry name" value="NAGK"/>
    <property type="match status" value="1"/>
</dbReference>
<dbReference type="SUPFAM" id="SSF53633">
    <property type="entry name" value="Carbamate kinase-like"/>
    <property type="match status" value="1"/>
</dbReference>
<organism>
    <name type="scientific">Chloroflexus aggregans (strain MD-66 / DSM 9485)</name>
    <dbReference type="NCBI Taxonomy" id="326427"/>
    <lineage>
        <taxon>Bacteria</taxon>
        <taxon>Bacillati</taxon>
        <taxon>Chloroflexota</taxon>
        <taxon>Chloroflexia</taxon>
        <taxon>Chloroflexales</taxon>
        <taxon>Chloroflexineae</taxon>
        <taxon>Chloroflexaceae</taxon>
        <taxon>Chloroflexus</taxon>
    </lineage>
</organism>
<name>ARGB_CHLAD</name>
<accession>B8G2Z2</accession>
<sequence>MNTIGVLKVSGHELDDPHFLAGLTGVIRTMTQPLVLVHGGGKEISAAVEQAGLPVEFVDGLRVTTPEVMAIMQMVVCGSINKRIVTALVNAGVRALGLSGLDIGLLRCEPYRPNGRDLGRVGVVTEVDGAALRHMLTLGWLPVIAPVALGSADGLSYNVNADMVAESIAGTLGTTELIFVSNVPGVLVDGQVVPRLTPAAVEDYIASGVISGGMIPKVRSALAALRRGATSVRIVNLAGLRDGGTRFVTEEAGS</sequence>
<proteinExistence type="inferred from homology"/>